<accession>O57250</accession>
<reference key="1">
    <citation type="journal article" date="1998" name="Virology">
        <title>The complete genomic sequence of the modified vaccinia Ankara strain: comparison with other orthopoxviruses.</title>
        <authorList>
            <person name="Antoine G."/>
            <person name="Scheiflinger F."/>
            <person name="Dorner F."/>
            <person name="Falkner F.G."/>
        </authorList>
    </citation>
    <scope>NUCLEOTIDE SEQUENCE [LARGE SCALE GENOMIC DNA]</scope>
</reference>
<reference key="2">
    <citation type="submission" date="2004-04" db="EMBL/GenBank/DDBJ databases">
        <authorList>
            <person name="Esposito J.J."/>
            <person name="Frace M."/>
            <person name="Sammons S.A."/>
            <person name="Olsen-Rasmussen M.S."/>
            <person name="Osborne J."/>
            <person name="Khristova M."/>
            <person name="Wohlhueter R.M."/>
        </authorList>
    </citation>
    <scope>NUCLEOTIDE SEQUENCE [LARGE SCALE GENOMIC DNA]</scope>
    <source>
        <strain>Isolate Acambis 3000</strain>
    </source>
</reference>
<organism>
    <name type="scientific">Vaccinia virus (strain Ankara)</name>
    <name type="common">VACV</name>
    <dbReference type="NCBI Taxonomy" id="126794"/>
    <lineage>
        <taxon>Viruses</taxon>
        <taxon>Varidnaviria</taxon>
        <taxon>Bamfordvirae</taxon>
        <taxon>Nucleocytoviricota</taxon>
        <taxon>Pokkesviricetes</taxon>
        <taxon>Chitovirales</taxon>
        <taxon>Poxviridae</taxon>
        <taxon>Chordopoxvirinae</taxon>
        <taxon>Orthopoxvirus</taxon>
        <taxon>Vaccinia virus</taxon>
    </lineage>
</organism>
<comment type="function">
    <text evidence="1">DNA ligase that seals nicks in double-stranded DNA during DNA replication, DNA recombination and DNA repair. Recruits cellular topoisomerase II to sites of viral replication and assembly.</text>
</comment>
<comment type="catalytic activity">
    <reaction evidence="3">
        <text>ATP + (deoxyribonucleotide)n-3'-hydroxyl + 5'-phospho-(deoxyribonucleotide)m = (deoxyribonucleotide)n+m + AMP + diphosphate.</text>
        <dbReference type="EC" id="6.5.1.1"/>
    </reaction>
</comment>
<comment type="cofactor">
    <cofactor evidence="2">
        <name>Mg(2+)</name>
        <dbReference type="ChEBI" id="CHEBI:18420"/>
    </cofactor>
</comment>
<comment type="subunit">
    <text evidence="1">Interacts with host TOP2A and TOP2B.</text>
</comment>
<comment type="subcellular location">
    <subcellularLocation>
        <location evidence="1">Host cytoplasm</location>
    </subcellularLocation>
    <text evidence="1">Found in sites viral of replication and assembly.</text>
</comment>
<comment type="induction">
    <text>Expressed in the early phase of the viral replicative cycle.</text>
</comment>
<comment type="similarity">
    <text evidence="4">Belongs to the ATP-dependent DNA ligase family.</text>
</comment>
<protein>
    <recommendedName>
        <fullName>DNA ligase</fullName>
        <ecNumber evidence="3">6.5.1.1</ecNumber>
    </recommendedName>
    <alternativeName>
        <fullName>Polydeoxyribonucleotide synthase [ATP]</fullName>
    </alternativeName>
</protein>
<organismHost>
    <name type="scientific">Homo sapiens</name>
    <name type="common">Human</name>
    <dbReference type="NCBI Taxonomy" id="9606"/>
</organismHost>
<keyword id="KW-0067">ATP-binding</keyword>
<keyword id="KW-0131">Cell cycle</keyword>
<keyword id="KW-0132">Cell division</keyword>
<keyword id="KW-0227">DNA damage</keyword>
<keyword id="KW-0233">DNA recombination</keyword>
<keyword id="KW-0234">DNA repair</keyword>
<keyword id="KW-0235">DNA replication</keyword>
<keyword id="KW-0244">Early protein</keyword>
<keyword id="KW-1035">Host cytoplasm</keyword>
<keyword id="KW-0436">Ligase</keyword>
<keyword id="KW-0460">Magnesium</keyword>
<keyword id="KW-0479">Metal-binding</keyword>
<keyword id="KW-0547">Nucleotide-binding</keyword>
<proteinExistence type="evidence at transcript level"/>
<evidence type="ECO:0000250" key="1">
    <source>
        <dbReference type="UniProtKB" id="P16272"/>
    </source>
</evidence>
<evidence type="ECO:0000250" key="2">
    <source>
        <dbReference type="UniProtKB" id="P18858"/>
    </source>
</evidence>
<evidence type="ECO:0000255" key="3">
    <source>
        <dbReference type="PROSITE-ProRule" id="PRU10135"/>
    </source>
</evidence>
<evidence type="ECO:0000305" key="4"/>
<feature type="chain" id="PRO_0000059587" description="DNA ligase">
    <location>
        <begin position="1"/>
        <end position="552"/>
    </location>
</feature>
<feature type="active site" description="N6-AMP-lysine intermediate" evidence="3">
    <location>
        <position position="231"/>
    </location>
</feature>
<feature type="binding site" evidence="2">
    <location>
        <position position="229"/>
    </location>
    <ligand>
        <name>ATP</name>
        <dbReference type="ChEBI" id="CHEBI:30616"/>
    </ligand>
</feature>
<feature type="binding site" evidence="2">
    <location>
        <position position="236"/>
    </location>
    <ligand>
        <name>ATP</name>
        <dbReference type="ChEBI" id="CHEBI:30616"/>
    </ligand>
</feature>
<feature type="binding site" evidence="2">
    <location>
        <position position="283"/>
    </location>
    <ligand>
        <name>ATP</name>
        <dbReference type="ChEBI" id="CHEBI:30616"/>
    </ligand>
</feature>
<feature type="binding site" evidence="2">
    <location>
        <position position="283"/>
    </location>
    <ligand>
        <name>Mg(2+)</name>
        <dbReference type="ChEBI" id="CHEBI:18420"/>
        <label>1</label>
    </ligand>
</feature>
<feature type="binding site" evidence="2">
    <location>
        <position position="377"/>
    </location>
    <ligand>
        <name>Mg(2+)</name>
        <dbReference type="ChEBI" id="CHEBI:18420"/>
        <label>2</label>
    </ligand>
</feature>
<feature type="binding site" evidence="2">
    <location>
        <position position="382"/>
    </location>
    <ligand>
        <name>ATP</name>
        <dbReference type="ChEBI" id="CHEBI:30616"/>
    </ligand>
</feature>
<feature type="binding site" evidence="2">
    <location>
        <position position="397"/>
    </location>
    <ligand>
        <name>ATP</name>
        <dbReference type="ChEBI" id="CHEBI:30616"/>
    </ligand>
</feature>
<gene>
    <name type="primary">OPG180</name>
    <name type="synonym">LIG</name>
    <name type="ordered locus">MVA163R</name>
    <name type="ordered locus">ACAM3000_MVA_163</name>
</gene>
<name>DNLI_VACCA</name>
<sequence length="552" mass="63468">MTSLREFRKLCCDIYHASGYKEKSKLIRDFITDRDDKYLIIKLLLPGLDDRIYNMNDKQIIKLYSIIFKQSQEDMLQDLGYGYIGDTIRTFFKENTEIRPRDKSILTLEEVDSFLTTLSSVTKESHQIKLLTDIASVCTCNDLKCVVMLIDKDLKIKAGPRYVLNAISPHAYDVFRKSNNLKEIIENASKQNLDSISISVMTPINPMLAESCDSVNKAFKKFPSGMFAEVKYDGERVQVHKNNNEFAFFSRNMKPVLSHKVDYLKEYIPKAFKKATSIVLDSEIVLVDEHNVPLPFGSLGIHKKKEYKNSNMCLFVFDCLYFDGFDMTDIPLYERRSFLKDVMVEIPNRIVFSELTNISNESQLTDVLDDALTRKLEGLVLKDINGVYEPGKRRWLKIKRDYLNEGSMADSADLVVLGAYYGKGAKGGIMAVFLMGCYDDESGKWKTVTKCSGHDDNTLRELQDQLKMIKINKDPKKIPEWLVVNKIYIPDFVVEDPKQSQIWEISGAEFTSSKSHTANGISIRFPRFTRIREDKTWKESTHLNDLVNLTKS</sequence>
<dbReference type="EC" id="6.5.1.1" evidence="3"/>
<dbReference type="EMBL" id="U94848">
    <property type="protein sequence ID" value="AAB96541.1"/>
    <property type="molecule type" value="Genomic_DNA"/>
</dbReference>
<dbReference type="EMBL" id="AY603355">
    <property type="protein sequence ID" value="AAT10561.1"/>
    <property type="molecule type" value="Genomic_DNA"/>
</dbReference>
<dbReference type="PIR" id="T37436">
    <property type="entry name" value="T37436"/>
</dbReference>
<dbReference type="SMR" id="O57250"/>
<dbReference type="Proteomes" id="UP000159908">
    <property type="component" value="Segment"/>
</dbReference>
<dbReference type="Proteomes" id="UP000172909">
    <property type="component" value="Segment"/>
</dbReference>
<dbReference type="GO" id="GO:0030430">
    <property type="term" value="C:host cell cytoplasm"/>
    <property type="evidence" value="ECO:0007669"/>
    <property type="project" value="UniProtKB-SubCell"/>
</dbReference>
<dbReference type="GO" id="GO:0005524">
    <property type="term" value="F:ATP binding"/>
    <property type="evidence" value="ECO:0007669"/>
    <property type="project" value="UniProtKB-KW"/>
</dbReference>
<dbReference type="GO" id="GO:0003677">
    <property type="term" value="F:DNA binding"/>
    <property type="evidence" value="ECO:0007669"/>
    <property type="project" value="InterPro"/>
</dbReference>
<dbReference type="GO" id="GO:0003910">
    <property type="term" value="F:DNA ligase (ATP) activity"/>
    <property type="evidence" value="ECO:0007669"/>
    <property type="project" value="UniProtKB-EC"/>
</dbReference>
<dbReference type="GO" id="GO:0046872">
    <property type="term" value="F:metal ion binding"/>
    <property type="evidence" value="ECO:0007669"/>
    <property type="project" value="UniProtKB-KW"/>
</dbReference>
<dbReference type="GO" id="GO:0051301">
    <property type="term" value="P:cell division"/>
    <property type="evidence" value="ECO:0007669"/>
    <property type="project" value="UniProtKB-KW"/>
</dbReference>
<dbReference type="GO" id="GO:0071897">
    <property type="term" value="P:DNA biosynthetic process"/>
    <property type="evidence" value="ECO:0007669"/>
    <property type="project" value="InterPro"/>
</dbReference>
<dbReference type="GO" id="GO:0006310">
    <property type="term" value="P:DNA recombination"/>
    <property type="evidence" value="ECO:0007669"/>
    <property type="project" value="UniProtKB-KW"/>
</dbReference>
<dbReference type="GO" id="GO:0006302">
    <property type="term" value="P:double-strand break repair"/>
    <property type="evidence" value="ECO:0007669"/>
    <property type="project" value="TreeGrafter"/>
</dbReference>
<dbReference type="GO" id="GO:0006273">
    <property type="term" value="P:lagging strand elongation"/>
    <property type="evidence" value="ECO:0007669"/>
    <property type="project" value="TreeGrafter"/>
</dbReference>
<dbReference type="CDD" id="cd07967">
    <property type="entry name" value="OBF_DNA_ligase_III"/>
    <property type="match status" value="1"/>
</dbReference>
<dbReference type="FunFam" id="2.40.50.140:FF:000085">
    <property type="entry name" value="DNA ligase"/>
    <property type="match status" value="1"/>
</dbReference>
<dbReference type="FunFam" id="3.30.470.30:FF:000003">
    <property type="entry name" value="DNA ligase"/>
    <property type="match status" value="1"/>
</dbReference>
<dbReference type="Gene3D" id="3.30.1490.70">
    <property type="match status" value="1"/>
</dbReference>
<dbReference type="Gene3D" id="1.10.3260.10">
    <property type="entry name" value="DNA ligase, ATP-dependent, N-terminal domain"/>
    <property type="match status" value="1"/>
</dbReference>
<dbReference type="Gene3D" id="3.30.470.30">
    <property type="entry name" value="DNA ligase/mRNA capping enzyme"/>
    <property type="match status" value="1"/>
</dbReference>
<dbReference type="Gene3D" id="2.40.50.140">
    <property type="entry name" value="Nucleic acid-binding proteins"/>
    <property type="match status" value="1"/>
</dbReference>
<dbReference type="InterPro" id="IPR050191">
    <property type="entry name" value="ATP-dep_DNA_ligase"/>
</dbReference>
<dbReference type="InterPro" id="IPR000977">
    <property type="entry name" value="DNA_ligase_ATP-dep"/>
</dbReference>
<dbReference type="InterPro" id="IPR012309">
    <property type="entry name" value="DNA_ligase_ATP-dep_C"/>
</dbReference>
<dbReference type="InterPro" id="IPR012310">
    <property type="entry name" value="DNA_ligase_ATP-dep_cent"/>
</dbReference>
<dbReference type="InterPro" id="IPR016059">
    <property type="entry name" value="DNA_ligase_ATP-dep_CS"/>
</dbReference>
<dbReference type="InterPro" id="IPR012308">
    <property type="entry name" value="DNA_ligase_ATP-dep_N"/>
</dbReference>
<dbReference type="InterPro" id="IPR036599">
    <property type="entry name" value="DNA_ligase_N_sf"/>
</dbReference>
<dbReference type="InterPro" id="IPR012340">
    <property type="entry name" value="NA-bd_OB-fold"/>
</dbReference>
<dbReference type="NCBIfam" id="TIGR00574">
    <property type="entry name" value="dnl1"/>
    <property type="match status" value="1"/>
</dbReference>
<dbReference type="PANTHER" id="PTHR45674">
    <property type="entry name" value="DNA LIGASE 1/3 FAMILY MEMBER"/>
    <property type="match status" value="1"/>
</dbReference>
<dbReference type="PANTHER" id="PTHR45674:SF9">
    <property type="entry name" value="DNA LIGASE 3"/>
    <property type="match status" value="1"/>
</dbReference>
<dbReference type="Pfam" id="PF04679">
    <property type="entry name" value="DNA_ligase_A_C"/>
    <property type="match status" value="1"/>
</dbReference>
<dbReference type="Pfam" id="PF01068">
    <property type="entry name" value="DNA_ligase_A_M"/>
    <property type="match status" value="1"/>
</dbReference>
<dbReference type="Pfam" id="PF04675">
    <property type="entry name" value="DNA_ligase_A_N"/>
    <property type="match status" value="1"/>
</dbReference>
<dbReference type="SUPFAM" id="SSF117018">
    <property type="entry name" value="ATP-dependent DNA ligase DNA-binding domain"/>
    <property type="match status" value="1"/>
</dbReference>
<dbReference type="SUPFAM" id="SSF56091">
    <property type="entry name" value="DNA ligase/mRNA capping enzyme, catalytic domain"/>
    <property type="match status" value="1"/>
</dbReference>
<dbReference type="SUPFAM" id="SSF50249">
    <property type="entry name" value="Nucleic acid-binding proteins"/>
    <property type="match status" value="1"/>
</dbReference>
<dbReference type="PROSITE" id="PS00697">
    <property type="entry name" value="DNA_LIGASE_A1"/>
    <property type="match status" value="1"/>
</dbReference>
<dbReference type="PROSITE" id="PS00333">
    <property type="entry name" value="DNA_LIGASE_A2"/>
    <property type="match status" value="1"/>
</dbReference>
<dbReference type="PROSITE" id="PS50160">
    <property type="entry name" value="DNA_LIGASE_A3"/>
    <property type="match status" value="1"/>
</dbReference>